<name>THIE_SERP5</name>
<feature type="chain" id="PRO_0000336429" description="Thiamine-phosphate synthase">
    <location>
        <begin position="1"/>
        <end position="212"/>
    </location>
</feature>
<feature type="binding site" evidence="1">
    <location>
        <begin position="39"/>
        <end position="43"/>
    </location>
    <ligand>
        <name>4-amino-2-methyl-5-(diphosphooxymethyl)pyrimidine</name>
        <dbReference type="ChEBI" id="CHEBI:57841"/>
    </ligand>
</feature>
<feature type="binding site" evidence="1">
    <location>
        <position position="71"/>
    </location>
    <ligand>
        <name>4-amino-2-methyl-5-(diphosphooxymethyl)pyrimidine</name>
        <dbReference type="ChEBI" id="CHEBI:57841"/>
    </ligand>
</feature>
<feature type="binding site" evidence="1">
    <location>
        <position position="72"/>
    </location>
    <ligand>
        <name>Mg(2+)</name>
        <dbReference type="ChEBI" id="CHEBI:18420"/>
    </ligand>
</feature>
<feature type="binding site" evidence="1">
    <location>
        <position position="91"/>
    </location>
    <ligand>
        <name>Mg(2+)</name>
        <dbReference type="ChEBI" id="CHEBI:18420"/>
    </ligand>
</feature>
<feature type="binding site" evidence="1">
    <location>
        <position position="110"/>
    </location>
    <ligand>
        <name>4-amino-2-methyl-5-(diphosphooxymethyl)pyrimidine</name>
        <dbReference type="ChEBI" id="CHEBI:57841"/>
    </ligand>
</feature>
<feature type="binding site" evidence="1">
    <location>
        <begin position="136"/>
        <end position="138"/>
    </location>
    <ligand>
        <name>2-[(2R,5Z)-2-carboxy-4-methylthiazol-5(2H)-ylidene]ethyl phosphate</name>
        <dbReference type="ChEBI" id="CHEBI:62899"/>
    </ligand>
</feature>
<feature type="binding site" evidence="1">
    <location>
        <position position="139"/>
    </location>
    <ligand>
        <name>4-amino-2-methyl-5-(diphosphooxymethyl)pyrimidine</name>
        <dbReference type="ChEBI" id="CHEBI:57841"/>
    </ligand>
</feature>
<feature type="binding site" evidence="1">
    <location>
        <position position="168"/>
    </location>
    <ligand>
        <name>2-[(2R,5Z)-2-carboxy-4-methylthiazol-5(2H)-ylidene]ethyl phosphate</name>
        <dbReference type="ChEBI" id="CHEBI:62899"/>
    </ligand>
</feature>
<feature type="binding site" evidence="1">
    <location>
        <begin position="188"/>
        <end position="189"/>
    </location>
    <ligand>
        <name>2-[(2R,5Z)-2-carboxy-4-methylthiazol-5(2H)-ylidene]ethyl phosphate</name>
        <dbReference type="ChEBI" id="CHEBI:62899"/>
    </ligand>
</feature>
<sequence>MTDITTPFPATPHKLGLYPVVDSVEWIARLLDAGVTTLQLRIKDLPDEQVEDDIAAAIALGKRYDARLFINDYWQLAIKHGAYGVHLGQEDLDTTDLAAIHRAGLRLGVSTHDDSELARAIAVKPSYIALGHIFPTQTKDMPSAPQGLVELKRHIAGLSDYPTVAIGGISIDRVAAVLDCGVGSVAVVSAITQAPDWRAATAQLLQLIEGKE</sequence>
<dbReference type="EC" id="2.5.1.3" evidence="1"/>
<dbReference type="EMBL" id="CP000826">
    <property type="protein sequence ID" value="ABV39393.1"/>
    <property type="molecule type" value="Genomic_DNA"/>
</dbReference>
<dbReference type="SMR" id="A8G8F3"/>
<dbReference type="STRING" id="399741.Spro_0283"/>
<dbReference type="KEGG" id="spe:Spro_0283"/>
<dbReference type="eggNOG" id="COG0352">
    <property type="taxonomic scope" value="Bacteria"/>
</dbReference>
<dbReference type="HOGENOM" id="CLU_018272_3_3_6"/>
<dbReference type="OrthoDB" id="9810880at2"/>
<dbReference type="UniPathway" id="UPA00060">
    <property type="reaction ID" value="UER00141"/>
</dbReference>
<dbReference type="GO" id="GO:0005737">
    <property type="term" value="C:cytoplasm"/>
    <property type="evidence" value="ECO:0007669"/>
    <property type="project" value="TreeGrafter"/>
</dbReference>
<dbReference type="GO" id="GO:0000287">
    <property type="term" value="F:magnesium ion binding"/>
    <property type="evidence" value="ECO:0007669"/>
    <property type="project" value="UniProtKB-UniRule"/>
</dbReference>
<dbReference type="GO" id="GO:0004789">
    <property type="term" value="F:thiamine-phosphate diphosphorylase activity"/>
    <property type="evidence" value="ECO:0007669"/>
    <property type="project" value="UniProtKB-UniRule"/>
</dbReference>
<dbReference type="GO" id="GO:0009228">
    <property type="term" value="P:thiamine biosynthetic process"/>
    <property type="evidence" value="ECO:0007669"/>
    <property type="project" value="UniProtKB-KW"/>
</dbReference>
<dbReference type="GO" id="GO:0009229">
    <property type="term" value="P:thiamine diphosphate biosynthetic process"/>
    <property type="evidence" value="ECO:0007669"/>
    <property type="project" value="UniProtKB-UniRule"/>
</dbReference>
<dbReference type="CDD" id="cd00564">
    <property type="entry name" value="TMP_TenI"/>
    <property type="match status" value="1"/>
</dbReference>
<dbReference type="FunFam" id="3.20.20.70:FF:000064">
    <property type="entry name" value="Thiamine-phosphate synthase"/>
    <property type="match status" value="1"/>
</dbReference>
<dbReference type="Gene3D" id="3.20.20.70">
    <property type="entry name" value="Aldolase class I"/>
    <property type="match status" value="1"/>
</dbReference>
<dbReference type="HAMAP" id="MF_00097">
    <property type="entry name" value="TMP_synthase"/>
    <property type="match status" value="1"/>
</dbReference>
<dbReference type="InterPro" id="IPR013785">
    <property type="entry name" value="Aldolase_TIM"/>
</dbReference>
<dbReference type="InterPro" id="IPR036206">
    <property type="entry name" value="ThiamineP_synth_sf"/>
</dbReference>
<dbReference type="InterPro" id="IPR022998">
    <property type="entry name" value="ThiamineP_synth_TenI"/>
</dbReference>
<dbReference type="InterPro" id="IPR034291">
    <property type="entry name" value="TMP_synthase"/>
</dbReference>
<dbReference type="NCBIfam" id="NF002904">
    <property type="entry name" value="PRK03512.1"/>
    <property type="match status" value="1"/>
</dbReference>
<dbReference type="NCBIfam" id="TIGR00693">
    <property type="entry name" value="thiE"/>
    <property type="match status" value="1"/>
</dbReference>
<dbReference type="PANTHER" id="PTHR20857">
    <property type="entry name" value="THIAMINE-PHOSPHATE PYROPHOSPHORYLASE"/>
    <property type="match status" value="1"/>
</dbReference>
<dbReference type="PANTHER" id="PTHR20857:SF15">
    <property type="entry name" value="THIAMINE-PHOSPHATE SYNTHASE"/>
    <property type="match status" value="1"/>
</dbReference>
<dbReference type="Pfam" id="PF02581">
    <property type="entry name" value="TMP-TENI"/>
    <property type="match status" value="1"/>
</dbReference>
<dbReference type="SUPFAM" id="SSF51391">
    <property type="entry name" value="Thiamin phosphate synthase"/>
    <property type="match status" value="1"/>
</dbReference>
<reference key="1">
    <citation type="submission" date="2007-09" db="EMBL/GenBank/DDBJ databases">
        <title>Complete sequence of chromosome of Serratia proteamaculans 568.</title>
        <authorList>
            <consortium name="US DOE Joint Genome Institute"/>
            <person name="Copeland A."/>
            <person name="Lucas S."/>
            <person name="Lapidus A."/>
            <person name="Barry K."/>
            <person name="Glavina del Rio T."/>
            <person name="Dalin E."/>
            <person name="Tice H."/>
            <person name="Pitluck S."/>
            <person name="Chain P."/>
            <person name="Malfatti S."/>
            <person name="Shin M."/>
            <person name="Vergez L."/>
            <person name="Schmutz J."/>
            <person name="Larimer F."/>
            <person name="Land M."/>
            <person name="Hauser L."/>
            <person name="Kyrpides N."/>
            <person name="Kim E."/>
            <person name="Taghavi S."/>
            <person name="Newman L."/>
            <person name="Vangronsveld J."/>
            <person name="van der Lelie D."/>
            <person name="Richardson P."/>
        </authorList>
    </citation>
    <scope>NUCLEOTIDE SEQUENCE [LARGE SCALE GENOMIC DNA]</scope>
    <source>
        <strain>568</strain>
    </source>
</reference>
<comment type="function">
    <text evidence="1">Condenses 4-methyl-5-(beta-hydroxyethyl)thiazole monophosphate (THZ-P) and 2-methyl-4-amino-5-hydroxymethyl pyrimidine pyrophosphate (HMP-PP) to form thiamine monophosphate (TMP).</text>
</comment>
<comment type="catalytic activity">
    <reaction evidence="1">
        <text>2-[(2R,5Z)-2-carboxy-4-methylthiazol-5(2H)-ylidene]ethyl phosphate + 4-amino-2-methyl-5-(diphosphooxymethyl)pyrimidine + 2 H(+) = thiamine phosphate + CO2 + diphosphate</text>
        <dbReference type="Rhea" id="RHEA:47844"/>
        <dbReference type="ChEBI" id="CHEBI:15378"/>
        <dbReference type="ChEBI" id="CHEBI:16526"/>
        <dbReference type="ChEBI" id="CHEBI:33019"/>
        <dbReference type="ChEBI" id="CHEBI:37575"/>
        <dbReference type="ChEBI" id="CHEBI:57841"/>
        <dbReference type="ChEBI" id="CHEBI:62899"/>
        <dbReference type="EC" id="2.5.1.3"/>
    </reaction>
</comment>
<comment type="catalytic activity">
    <reaction evidence="1">
        <text>2-(2-carboxy-4-methylthiazol-5-yl)ethyl phosphate + 4-amino-2-methyl-5-(diphosphooxymethyl)pyrimidine + 2 H(+) = thiamine phosphate + CO2 + diphosphate</text>
        <dbReference type="Rhea" id="RHEA:47848"/>
        <dbReference type="ChEBI" id="CHEBI:15378"/>
        <dbReference type="ChEBI" id="CHEBI:16526"/>
        <dbReference type="ChEBI" id="CHEBI:33019"/>
        <dbReference type="ChEBI" id="CHEBI:37575"/>
        <dbReference type="ChEBI" id="CHEBI:57841"/>
        <dbReference type="ChEBI" id="CHEBI:62890"/>
        <dbReference type="EC" id="2.5.1.3"/>
    </reaction>
</comment>
<comment type="catalytic activity">
    <reaction evidence="1">
        <text>4-methyl-5-(2-phosphooxyethyl)-thiazole + 4-amino-2-methyl-5-(diphosphooxymethyl)pyrimidine + H(+) = thiamine phosphate + diphosphate</text>
        <dbReference type="Rhea" id="RHEA:22328"/>
        <dbReference type="ChEBI" id="CHEBI:15378"/>
        <dbReference type="ChEBI" id="CHEBI:33019"/>
        <dbReference type="ChEBI" id="CHEBI:37575"/>
        <dbReference type="ChEBI" id="CHEBI:57841"/>
        <dbReference type="ChEBI" id="CHEBI:58296"/>
        <dbReference type="EC" id="2.5.1.3"/>
    </reaction>
</comment>
<comment type="cofactor">
    <cofactor evidence="1">
        <name>Mg(2+)</name>
        <dbReference type="ChEBI" id="CHEBI:18420"/>
    </cofactor>
    <text evidence="1">Binds 1 Mg(2+) ion per subunit.</text>
</comment>
<comment type="pathway">
    <text evidence="1">Cofactor biosynthesis; thiamine diphosphate biosynthesis; thiamine phosphate from 4-amino-2-methyl-5-diphosphomethylpyrimidine and 4-methyl-5-(2-phosphoethyl)-thiazole: step 1/1.</text>
</comment>
<comment type="similarity">
    <text evidence="1">Belongs to the thiamine-phosphate synthase family.</text>
</comment>
<protein>
    <recommendedName>
        <fullName evidence="1">Thiamine-phosphate synthase</fullName>
        <shortName evidence="1">TP synthase</shortName>
        <shortName evidence="1">TPS</shortName>
        <ecNumber evidence="1">2.5.1.3</ecNumber>
    </recommendedName>
    <alternativeName>
        <fullName evidence="1">Thiamine-phosphate pyrophosphorylase</fullName>
        <shortName evidence="1">TMP pyrophosphorylase</shortName>
        <shortName evidence="1">TMP-PPase</shortName>
    </alternativeName>
</protein>
<accession>A8G8F3</accession>
<evidence type="ECO:0000255" key="1">
    <source>
        <dbReference type="HAMAP-Rule" id="MF_00097"/>
    </source>
</evidence>
<keyword id="KW-0460">Magnesium</keyword>
<keyword id="KW-0479">Metal-binding</keyword>
<keyword id="KW-0784">Thiamine biosynthesis</keyword>
<keyword id="KW-0808">Transferase</keyword>
<gene>
    <name evidence="1" type="primary">thiE</name>
    <name type="ordered locus">Spro_0283</name>
</gene>
<proteinExistence type="inferred from homology"/>
<organism>
    <name type="scientific">Serratia proteamaculans (strain 568)</name>
    <dbReference type="NCBI Taxonomy" id="399741"/>
    <lineage>
        <taxon>Bacteria</taxon>
        <taxon>Pseudomonadati</taxon>
        <taxon>Pseudomonadota</taxon>
        <taxon>Gammaproteobacteria</taxon>
        <taxon>Enterobacterales</taxon>
        <taxon>Yersiniaceae</taxon>
        <taxon>Serratia</taxon>
    </lineage>
</organism>